<proteinExistence type="inferred from homology"/>
<protein>
    <recommendedName>
        <fullName evidence="1">GTP cyclohydrolase-2</fullName>
        <ecNumber evidence="1">3.5.4.25</ecNumber>
    </recommendedName>
    <alternativeName>
        <fullName evidence="1">GTP cyclohydrolase II</fullName>
    </alternativeName>
</protein>
<keyword id="KW-0342">GTP-binding</keyword>
<keyword id="KW-0378">Hydrolase</keyword>
<keyword id="KW-0479">Metal-binding</keyword>
<keyword id="KW-0547">Nucleotide-binding</keyword>
<keyword id="KW-1185">Reference proteome</keyword>
<keyword id="KW-0686">Riboflavin biosynthesis</keyword>
<keyword id="KW-0862">Zinc</keyword>
<feature type="chain" id="PRO_1000040576" description="GTP cyclohydrolase-2">
    <location>
        <begin position="1"/>
        <end position="200"/>
    </location>
</feature>
<feature type="active site" description="Proton acceptor" evidence="1">
    <location>
        <position position="128"/>
    </location>
</feature>
<feature type="active site" description="Nucleophile" evidence="1">
    <location>
        <position position="130"/>
    </location>
</feature>
<feature type="binding site" evidence="1">
    <location>
        <begin position="52"/>
        <end position="56"/>
    </location>
    <ligand>
        <name>GTP</name>
        <dbReference type="ChEBI" id="CHEBI:37565"/>
    </ligand>
</feature>
<feature type="binding site" evidence="1">
    <location>
        <position position="57"/>
    </location>
    <ligand>
        <name>Zn(2+)</name>
        <dbReference type="ChEBI" id="CHEBI:29105"/>
        <note>catalytic</note>
    </ligand>
</feature>
<feature type="binding site" evidence="1">
    <location>
        <position position="68"/>
    </location>
    <ligand>
        <name>Zn(2+)</name>
        <dbReference type="ChEBI" id="CHEBI:29105"/>
        <note>catalytic</note>
    </ligand>
</feature>
<feature type="binding site" evidence="1">
    <location>
        <position position="70"/>
    </location>
    <ligand>
        <name>Zn(2+)</name>
        <dbReference type="ChEBI" id="CHEBI:29105"/>
        <note>catalytic</note>
    </ligand>
</feature>
<feature type="binding site" evidence="1">
    <location>
        <position position="73"/>
    </location>
    <ligand>
        <name>GTP</name>
        <dbReference type="ChEBI" id="CHEBI:37565"/>
    </ligand>
</feature>
<feature type="binding site" evidence="1">
    <location>
        <begin position="94"/>
        <end position="96"/>
    </location>
    <ligand>
        <name>GTP</name>
        <dbReference type="ChEBI" id="CHEBI:37565"/>
    </ligand>
</feature>
<feature type="binding site" evidence="1">
    <location>
        <position position="116"/>
    </location>
    <ligand>
        <name>GTP</name>
        <dbReference type="ChEBI" id="CHEBI:37565"/>
    </ligand>
</feature>
<feature type="binding site" evidence="1">
    <location>
        <position position="151"/>
    </location>
    <ligand>
        <name>GTP</name>
        <dbReference type="ChEBI" id="CHEBI:37565"/>
    </ligand>
</feature>
<feature type="binding site" evidence="1">
    <location>
        <position position="156"/>
    </location>
    <ligand>
        <name>GTP</name>
        <dbReference type="ChEBI" id="CHEBI:37565"/>
    </ligand>
</feature>
<evidence type="ECO:0000255" key="1">
    <source>
        <dbReference type="HAMAP-Rule" id="MF_00179"/>
    </source>
</evidence>
<accession>A1SSA8</accession>
<gene>
    <name evidence="1" type="primary">ribA</name>
    <name type="ordered locus">Ping_0518</name>
</gene>
<comment type="function">
    <text evidence="1">Catalyzes the conversion of GTP to 2,5-diamino-6-ribosylamino-4(3H)-pyrimidinone 5'-phosphate (DARP), formate and pyrophosphate.</text>
</comment>
<comment type="catalytic activity">
    <reaction evidence="1">
        <text>GTP + 4 H2O = 2,5-diamino-6-hydroxy-4-(5-phosphoribosylamino)-pyrimidine + formate + 2 phosphate + 3 H(+)</text>
        <dbReference type="Rhea" id="RHEA:23704"/>
        <dbReference type="ChEBI" id="CHEBI:15377"/>
        <dbReference type="ChEBI" id="CHEBI:15378"/>
        <dbReference type="ChEBI" id="CHEBI:15740"/>
        <dbReference type="ChEBI" id="CHEBI:37565"/>
        <dbReference type="ChEBI" id="CHEBI:43474"/>
        <dbReference type="ChEBI" id="CHEBI:58614"/>
        <dbReference type="EC" id="3.5.4.25"/>
    </reaction>
</comment>
<comment type="cofactor">
    <cofactor evidence="1">
        <name>Zn(2+)</name>
        <dbReference type="ChEBI" id="CHEBI:29105"/>
    </cofactor>
    <text evidence="1">Binds 1 zinc ion per subunit.</text>
</comment>
<comment type="pathway">
    <text evidence="1">Cofactor biosynthesis; riboflavin biosynthesis; 5-amino-6-(D-ribitylamino)uracil from GTP: step 1/4.</text>
</comment>
<comment type="similarity">
    <text evidence="1">Belongs to the GTP cyclohydrolase II family.</text>
</comment>
<name>RIBA_PSYIN</name>
<organism>
    <name type="scientific">Psychromonas ingrahamii (strain DSM 17664 / CCUG 51855 / 37)</name>
    <dbReference type="NCBI Taxonomy" id="357804"/>
    <lineage>
        <taxon>Bacteria</taxon>
        <taxon>Pseudomonadati</taxon>
        <taxon>Pseudomonadota</taxon>
        <taxon>Gammaproteobacteria</taxon>
        <taxon>Alteromonadales</taxon>
        <taxon>Psychromonadaceae</taxon>
        <taxon>Psychromonas</taxon>
    </lineage>
</organism>
<sequence length="200" mass="22307">MTKVRTKISLKIGANSRIPAQIASFNGLTSDKEHIAIIFGKADECSSSPIVRIHSECLTGDVFHSSRCDCGEQLDEAIELMEKEGGIIIYLRQEGRGIGLYNKIDAYKLQSEGMDTYQANNQLGFEDDLRDFTEAGQMLAALNIRKLQLLTNNPLKVKALREYGITVDKVISTSTFIKDDNESYLRTKAKNAGHAIRFPF</sequence>
<dbReference type="EC" id="3.5.4.25" evidence="1"/>
<dbReference type="EMBL" id="CP000510">
    <property type="protein sequence ID" value="ABM02373.1"/>
    <property type="molecule type" value="Genomic_DNA"/>
</dbReference>
<dbReference type="RefSeq" id="WP_011768932.1">
    <property type="nucleotide sequence ID" value="NC_008709.1"/>
</dbReference>
<dbReference type="SMR" id="A1SSA8"/>
<dbReference type="STRING" id="357804.Ping_0518"/>
<dbReference type="KEGG" id="pin:Ping_0518"/>
<dbReference type="eggNOG" id="COG0807">
    <property type="taxonomic scope" value="Bacteria"/>
</dbReference>
<dbReference type="HOGENOM" id="CLU_020273_2_1_6"/>
<dbReference type="OrthoDB" id="9793111at2"/>
<dbReference type="UniPathway" id="UPA00275">
    <property type="reaction ID" value="UER00400"/>
</dbReference>
<dbReference type="Proteomes" id="UP000000639">
    <property type="component" value="Chromosome"/>
</dbReference>
<dbReference type="GO" id="GO:0005829">
    <property type="term" value="C:cytosol"/>
    <property type="evidence" value="ECO:0007669"/>
    <property type="project" value="TreeGrafter"/>
</dbReference>
<dbReference type="GO" id="GO:0005525">
    <property type="term" value="F:GTP binding"/>
    <property type="evidence" value="ECO:0007669"/>
    <property type="project" value="UniProtKB-KW"/>
</dbReference>
<dbReference type="GO" id="GO:0003935">
    <property type="term" value="F:GTP cyclohydrolase II activity"/>
    <property type="evidence" value="ECO:0007669"/>
    <property type="project" value="UniProtKB-UniRule"/>
</dbReference>
<dbReference type="GO" id="GO:0008270">
    <property type="term" value="F:zinc ion binding"/>
    <property type="evidence" value="ECO:0007669"/>
    <property type="project" value="UniProtKB-UniRule"/>
</dbReference>
<dbReference type="GO" id="GO:0009231">
    <property type="term" value="P:riboflavin biosynthetic process"/>
    <property type="evidence" value="ECO:0007669"/>
    <property type="project" value="UniProtKB-UniRule"/>
</dbReference>
<dbReference type="CDD" id="cd00641">
    <property type="entry name" value="GTP_cyclohydro2"/>
    <property type="match status" value="1"/>
</dbReference>
<dbReference type="FunFam" id="3.40.50.10990:FF:000001">
    <property type="entry name" value="Riboflavin biosynthesis protein RibBA"/>
    <property type="match status" value="1"/>
</dbReference>
<dbReference type="Gene3D" id="3.40.50.10990">
    <property type="entry name" value="GTP cyclohydrolase II"/>
    <property type="match status" value="1"/>
</dbReference>
<dbReference type="HAMAP" id="MF_00179">
    <property type="entry name" value="RibA"/>
    <property type="match status" value="1"/>
</dbReference>
<dbReference type="InterPro" id="IPR032677">
    <property type="entry name" value="GTP_cyclohydro_II"/>
</dbReference>
<dbReference type="InterPro" id="IPR000926">
    <property type="entry name" value="RibA"/>
</dbReference>
<dbReference type="InterPro" id="IPR036144">
    <property type="entry name" value="RibA-like_sf"/>
</dbReference>
<dbReference type="NCBIfam" id="NF001591">
    <property type="entry name" value="PRK00393.1"/>
    <property type="match status" value="1"/>
</dbReference>
<dbReference type="NCBIfam" id="TIGR00505">
    <property type="entry name" value="ribA"/>
    <property type="match status" value="1"/>
</dbReference>
<dbReference type="PANTHER" id="PTHR21327:SF18">
    <property type="entry name" value="3,4-DIHYDROXY-2-BUTANONE 4-PHOSPHATE SYNTHASE"/>
    <property type="match status" value="1"/>
</dbReference>
<dbReference type="PANTHER" id="PTHR21327">
    <property type="entry name" value="GTP CYCLOHYDROLASE II-RELATED"/>
    <property type="match status" value="1"/>
</dbReference>
<dbReference type="Pfam" id="PF00925">
    <property type="entry name" value="GTP_cyclohydro2"/>
    <property type="match status" value="1"/>
</dbReference>
<dbReference type="SUPFAM" id="SSF142695">
    <property type="entry name" value="RibA-like"/>
    <property type="match status" value="1"/>
</dbReference>
<reference key="1">
    <citation type="journal article" date="2008" name="BMC Genomics">
        <title>Genomics of an extreme psychrophile, Psychromonas ingrahamii.</title>
        <authorList>
            <person name="Riley M."/>
            <person name="Staley J.T."/>
            <person name="Danchin A."/>
            <person name="Wang T.Z."/>
            <person name="Brettin T.S."/>
            <person name="Hauser L.J."/>
            <person name="Land M.L."/>
            <person name="Thompson L.S."/>
        </authorList>
    </citation>
    <scope>NUCLEOTIDE SEQUENCE [LARGE SCALE GENOMIC DNA]</scope>
    <source>
        <strain>DSM 17664 / CCUG 51855 / 37</strain>
    </source>
</reference>